<organism>
    <name type="scientific">Arabidopsis thaliana</name>
    <name type="common">Mouse-ear cress</name>
    <dbReference type="NCBI Taxonomy" id="3702"/>
    <lineage>
        <taxon>Eukaryota</taxon>
        <taxon>Viridiplantae</taxon>
        <taxon>Streptophyta</taxon>
        <taxon>Embryophyta</taxon>
        <taxon>Tracheophyta</taxon>
        <taxon>Spermatophyta</taxon>
        <taxon>Magnoliopsida</taxon>
        <taxon>eudicotyledons</taxon>
        <taxon>Gunneridae</taxon>
        <taxon>Pentapetalae</taxon>
        <taxon>rosids</taxon>
        <taxon>malvids</taxon>
        <taxon>Brassicales</taxon>
        <taxon>Brassicaceae</taxon>
        <taxon>Camelineae</taxon>
        <taxon>Arabidopsis</taxon>
    </lineage>
</organism>
<name>IDD8_ARATH</name>
<proteinExistence type="evidence at protein level"/>
<protein>
    <recommendedName>
        <fullName evidence="11">Zinc finger protein NUTCRACKER</fullName>
    </recommendedName>
    <alternativeName>
        <fullName evidence="10">Protein indeterminate-domain 8</fullName>
    </alternativeName>
</protein>
<dbReference type="EMBL" id="AB005239">
    <property type="protein sequence ID" value="BAB10983.1"/>
    <property type="molecule type" value="Genomic_DNA"/>
</dbReference>
<dbReference type="EMBL" id="CP002688">
    <property type="protein sequence ID" value="AED95068.1"/>
    <property type="molecule type" value="Genomic_DNA"/>
</dbReference>
<dbReference type="EMBL" id="AY037202">
    <property type="protein sequence ID" value="AAK59787.1"/>
    <property type="molecule type" value="mRNA"/>
</dbReference>
<dbReference type="EMBL" id="BT002685">
    <property type="protein sequence ID" value="AAO11601.1"/>
    <property type="molecule type" value="mRNA"/>
</dbReference>
<dbReference type="RefSeq" id="NP_199229.1">
    <property type="nucleotide sequence ID" value="NM_123783.4"/>
</dbReference>
<dbReference type="BioGRID" id="19689">
    <property type="interactions" value="5"/>
</dbReference>
<dbReference type="FunCoup" id="Q9FFH3">
    <property type="interactions" value="5"/>
</dbReference>
<dbReference type="IntAct" id="Q9FFH3">
    <property type="interactions" value="3"/>
</dbReference>
<dbReference type="STRING" id="3702.Q9FFH3"/>
<dbReference type="iPTMnet" id="Q9FFH3"/>
<dbReference type="PaxDb" id="3702-AT5G44160.1"/>
<dbReference type="ProteomicsDB" id="228789"/>
<dbReference type="EnsemblPlants" id="AT5G44160.1">
    <property type="protein sequence ID" value="AT5G44160.1"/>
    <property type="gene ID" value="AT5G44160"/>
</dbReference>
<dbReference type="GeneID" id="834439"/>
<dbReference type="Gramene" id="AT5G44160.1">
    <property type="protein sequence ID" value="AT5G44160.1"/>
    <property type="gene ID" value="AT5G44160"/>
</dbReference>
<dbReference type="KEGG" id="ath:AT5G44160"/>
<dbReference type="Araport" id="AT5G44160"/>
<dbReference type="TAIR" id="AT5G44160">
    <property type="gene designation" value="NUC"/>
</dbReference>
<dbReference type="eggNOG" id="KOG1721">
    <property type="taxonomic scope" value="Eukaryota"/>
</dbReference>
<dbReference type="HOGENOM" id="CLU_014578_3_1_1"/>
<dbReference type="InParanoid" id="Q9FFH3"/>
<dbReference type="PhylomeDB" id="Q9FFH3"/>
<dbReference type="PRO" id="PR:Q9FFH3"/>
<dbReference type="Proteomes" id="UP000006548">
    <property type="component" value="Chromosome 5"/>
</dbReference>
<dbReference type="ExpressionAtlas" id="Q9FFH3">
    <property type="expression patterns" value="baseline and differential"/>
</dbReference>
<dbReference type="GO" id="GO:0005634">
    <property type="term" value="C:nucleus"/>
    <property type="evidence" value="ECO:0000314"/>
    <property type="project" value="UniProtKB"/>
</dbReference>
<dbReference type="GO" id="GO:0003700">
    <property type="term" value="F:DNA-binding transcription factor activity"/>
    <property type="evidence" value="ECO:0000314"/>
    <property type="project" value="UniProtKB"/>
</dbReference>
<dbReference type="GO" id="GO:0019900">
    <property type="term" value="F:kinase binding"/>
    <property type="evidence" value="ECO:0000353"/>
    <property type="project" value="UniProtKB"/>
</dbReference>
<dbReference type="GO" id="GO:0000976">
    <property type="term" value="F:transcription cis-regulatory region binding"/>
    <property type="evidence" value="ECO:0000353"/>
    <property type="project" value="TAIR"/>
</dbReference>
<dbReference type="GO" id="GO:0008270">
    <property type="term" value="F:zinc ion binding"/>
    <property type="evidence" value="ECO:0007669"/>
    <property type="project" value="UniProtKB-KW"/>
</dbReference>
<dbReference type="GO" id="GO:0008356">
    <property type="term" value="P:asymmetric cell division"/>
    <property type="evidence" value="ECO:0000315"/>
    <property type="project" value="TAIR"/>
</dbReference>
<dbReference type="GO" id="GO:0010150">
    <property type="term" value="P:leaf senescence"/>
    <property type="evidence" value="ECO:0000315"/>
    <property type="project" value="TAIR"/>
</dbReference>
<dbReference type="GO" id="GO:0048573">
    <property type="term" value="P:photoperiodism, flowering"/>
    <property type="evidence" value="ECO:0000315"/>
    <property type="project" value="TAIR"/>
</dbReference>
<dbReference type="GO" id="GO:0045893">
    <property type="term" value="P:positive regulation of DNA-templated transcription"/>
    <property type="evidence" value="ECO:0000314"/>
    <property type="project" value="UniProtKB"/>
</dbReference>
<dbReference type="GO" id="GO:0034504">
    <property type="term" value="P:protein localization to nucleus"/>
    <property type="evidence" value="ECO:0000315"/>
    <property type="project" value="UniProtKB"/>
</dbReference>
<dbReference type="GO" id="GO:0006355">
    <property type="term" value="P:regulation of DNA-templated transcription"/>
    <property type="evidence" value="ECO:0000304"/>
    <property type="project" value="TAIR"/>
</dbReference>
<dbReference type="GO" id="GO:0010075">
    <property type="term" value="P:regulation of meristem growth"/>
    <property type="evidence" value="ECO:0000315"/>
    <property type="project" value="UniProtKB"/>
</dbReference>
<dbReference type="GO" id="GO:0048510">
    <property type="term" value="P:regulation of timing of transition from vegetative to reproductive phase"/>
    <property type="evidence" value="ECO:0000315"/>
    <property type="project" value="UniProtKB"/>
</dbReference>
<dbReference type="GO" id="GO:0048364">
    <property type="term" value="P:root development"/>
    <property type="evidence" value="ECO:0000316"/>
    <property type="project" value="TAIR"/>
</dbReference>
<dbReference type="FunFam" id="3.30.160.60:FF:000554">
    <property type="entry name" value="protein indeterminate-domain 12-like"/>
    <property type="match status" value="1"/>
</dbReference>
<dbReference type="FunFam" id="3.30.160.60:FF:000131">
    <property type="entry name" value="protein indeterminate-domain 5, chloroplastic-like"/>
    <property type="match status" value="1"/>
</dbReference>
<dbReference type="Gene3D" id="3.30.160.60">
    <property type="entry name" value="Classic Zinc Finger"/>
    <property type="match status" value="2"/>
</dbReference>
<dbReference type="InterPro" id="IPR055187">
    <property type="entry name" value="C2CH-3rd_BIRD-IDD"/>
</dbReference>
<dbReference type="InterPro" id="IPR055185">
    <property type="entry name" value="C2CH-4th_BIRD-IDD"/>
</dbReference>
<dbReference type="InterPro" id="IPR055186">
    <property type="entry name" value="C2H2-2nd_BIRD-IDD"/>
</dbReference>
<dbReference type="InterPro" id="IPR031140">
    <property type="entry name" value="IDD1-16"/>
</dbReference>
<dbReference type="InterPro" id="IPR036236">
    <property type="entry name" value="Znf_C2H2_sf"/>
</dbReference>
<dbReference type="InterPro" id="IPR013087">
    <property type="entry name" value="Znf_C2H2_type"/>
</dbReference>
<dbReference type="PANTHER" id="PTHR10593">
    <property type="entry name" value="SERINE/THREONINE-PROTEIN KINASE RIO"/>
    <property type="match status" value="1"/>
</dbReference>
<dbReference type="PANTHER" id="PTHR10593:SF178">
    <property type="entry name" value="ZINC FINGER PROTEIN NUTCRACKER"/>
    <property type="match status" value="1"/>
</dbReference>
<dbReference type="Pfam" id="PF22995">
    <property type="entry name" value="C2CH-3rd_BIRD-IDD"/>
    <property type="match status" value="1"/>
</dbReference>
<dbReference type="Pfam" id="PF22992">
    <property type="entry name" value="C2CH-4th_BIRD-IDD"/>
    <property type="match status" value="1"/>
</dbReference>
<dbReference type="Pfam" id="PF22996">
    <property type="entry name" value="C2H2-2nd_BIRD-IDD"/>
    <property type="match status" value="1"/>
</dbReference>
<dbReference type="Pfam" id="PF00096">
    <property type="entry name" value="zf-C2H2"/>
    <property type="match status" value="1"/>
</dbReference>
<dbReference type="SUPFAM" id="SSF57667">
    <property type="entry name" value="beta-beta-alpha zinc fingers"/>
    <property type="match status" value="1"/>
</dbReference>
<dbReference type="PROSITE" id="PS00028">
    <property type="entry name" value="ZINC_FINGER_C2H2_1"/>
    <property type="match status" value="1"/>
</dbReference>
<dbReference type="PROSITE" id="PS50157">
    <property type="entry name" value="ZINC_FINGER_C2H2_2"/>
    <property type="match status" value="1"/>
</dbReference>
<comment type="function">
    <text evidence="7 8 9">Transcription activator that binds to the DNA sequence 5'-CTTTTGTCC-3' (PubMed:21265895, PubMed:25929516). Regulates photoperiodic flowering by modulating sugar transport and metabolism (PubMed:21265895, PubMed:25929516). Regulates SUS1 and SUS4 (PubMed:21265895). Transcription factor that regulates tissue boundaries and asymmetric cell division (PubMed:25829440). Contributes to the sequestration of 'SHORT-ROOT' to the nucleus (PubMed:25829440).</text>
</comment>
<comment type="subunit">
    <text evidence="9">Interacts with AKIN10.</text>
</comment>
<comment type="subcellular location">
    <subcellularLocation>
        <location evidence="4 7 9">Nucleus</location>
    </subcellularLocation>
</comment>
<comment type="tissue specificity">
    <text evidence="7 8 13">Highly expressed in vegetative organs and at lower levels in flowers and siliques. Expressed predominantly in roots. In roots, present in cortex, endodermis, and pericycle layer (PubMed:25829440).</text>
</comment>
<comment type="developmental stage">
    <text evidence="7">Expressed throughout development.</text>
</comment>
<comment type="induction">
    <text evidence="6">Up-regulated by 'SHORT-ROOT' (SHR) (PubMed:16640459). Strongly down-regulated by sugar deprivation, but not regulated by day-length.</text>
</comment>
<comment type="PTM">
    <text evidence="9">Inhibition of transcription factor activity by KIN10-mediated phosphorylation at Thr-98, Ser-178 and Ser-182 under sugar deprivation conditions, thus delaying flowering.</text>
</comment>
<comment type="disruption phenotype">
    <text evidence="7 8 9">Delayed flowering (PubMed:21265895, PubMed:25929516). Roots of the triple mutant jkd mgp nuc contain patches of undivided ground tissue (GT), indicating that cortex and endodermis layers are not fully separated. The quadruple mutant line jkd mgp nuc scr has short root meristems, lacks endodermis and miss Casparian strip (PubMed:25829440).</text>
</comment>
<keyword id="KW-0010">Activator</keyword>
<keyword id="KW-0238">DNA-binding</keyword>
<keyword id="KW-0479">Metal-binding</keyword>
<keyword id="KW-0539">Nucleus</keyword>
<keyword id="KW-0597">Phosphoprotein</keyword>
<keyword id="KW-1185">Reference proteome</keyword>
<keyword id="KW-0677">Repeat</keyword>
<keyword id="KW-0804">Transcription</keyword>
<keyword id="KW-0805">Transcription regulation</keyword>
<keyword id="KW-0862">Zinc</keyword>
<keyword id="KW-0863">Zinc-finger</keyword>
<accession>Q9FFH3</accession>
<gene>
    <name evidence="11" type="primary">NUC</name>
    <name evidence="10" type="synonym">IDD8</name>
    <name type="ordered locus">At5g44160</name>
    <name type="ORF">MLN1.8</name>
</gene>
<sequence length="466" mass="51189">MTSEVLQTISSGSGFAQPQSSSTLDHDESLINPPLVKKKRNLPGNPDPEAEVIALSPTTLMATNRFLCEVCGKGFQRDQNLQLHRRGHNLPWKLKQRTSKEVRKRVYVCPEKTCVHHHSSRALGDLTGIKKHFCRKHGEKKWTCEKCAKRYAVQSDWKAHSKTCGTREYRCDCGTIFSRRDSFITHRAFCDALAEETAKINAVSHLNGLAAAGAPGSVNLNYQYLMGTFIPPLQPFVPQPQTNPNHHHQHFQPPTSSSLSLWMGQDIAPPQPQPDYDWVFGNAKAASACIDNNNTHDEQITQNANASLTTTTTLSAPSLFSSDQPQNANANSNVNMSATALLQKAAEIGATSTTTAATNDPSTFLQSFPLKSTDQTTSYDSGEKFFALFGSNNNIGLMSRSHDHQEIENARNDVTVASALDELQNYPWKRRRVDGGGEVGGGGQTRDFLGVGVQTLCHPSSINGWI</sequence>
<feature type="chain" id="PRO_0000337842" description="Zinc finger protein NUTCRACKER">
    <location>
        <begin position="1"/>
        <end position="466"/>
    </location>
</feature>
<feature type="zinc finger region" description="C2H2-type 1" evidence="3">
    <location>
        <begin position="66"/>
        <end position="88"/>
    </location>
</feature>
<feature type="zinc finger region" description="C2H2-type 2" evidence="12">
    <location>
        <begin position="107"/>
        <end position="137"/>
    </location>
</feature>
<feature type="zinc finger region" description="C2H2-type 2; degenerate" evidence="3">
    <location>
        <begin position="142"/>
        <end position="165"/>
    </location>
</feature>
<feature type="zinc finger region" description="CCHC-type 2; atypical" evidence="12">
    <location>
        <begin position="169"/>
        <end position="192"/>
    </location>
</feature>
<feature type="region of interest" description="Disordered" evidence="5">
    <location>
        <begin position="1"/>
        <end position="29"/>
    </location>
</feature>
<feature type="region of interest" description="SHR-binding" evidence="1">
    <location>
        <begin position="179"/>
        <end position="191"/>
    </location>
</feature>
<feature type="short sequence motif" description="Nuclear localization signal" evidence="4">
    <location>
        <begin position="134"/>
        <end position="141"/>
    </location>
</feature>
<feature type="compositionally biased region" description="Polar residues" evidence="5">
    <location>
        <begin position="1"/>
        <end position="23"/>
    </location>
</feature>
<feature type="binding site" evidence="1">
    <location>
        <position position="144"/>
    </location>
    <ligand>
        <name>Zn(2+)</name>
        <dbReference type="ChEBI" id="CHEBI:29105"/>
        <label>1</label>
    </ligand>
</feature>
<feature type="binding site" evidence="1">
    <location>
        <position position="147"/>
    </location>
    <ligand>
        <name>Zn(2+)</name>
        <dbReference type="ChEBI" id="CHEBI:29105"/>
        <label>1</label>
    </ligand>
</feature>
<feature type="binding site" evidence="1">
    <location>
        <position position="160"/>
    </location>
    <ligand>
        <name>Zn(2+)</name>
        <dbReference type="ChEBI" id="CHEBI:29105"/>
        <label>1</label>
    </ligand>
</feature>
<feature type="binding site" evidence="1">
    <location>
        <position position="164"/>
    </location>
    <ligand>
        <name>Zn(2+)</name>
        <dbReference type="ChEBI" id="CHEBI:29105"/>
        <label>1</label>
    </ligand>
</feature>
<feature type="binding site" evidence="1">
    <location>
        <position position="171"/>
    </location>
    <ligand>
        <name>Zn(2+)</name>
        <dbReference type="ChEBI" id="CHEBI:29105"/>
        <label>2</label>
    </ligand>
</feature>
<feature type="binding site" evidence="1">
    <location>
        <position position="173"/>
    </location>
    <ligand>
        <name>Zn(2+)</name>
        <dbReference type="ChEBI" id="CHEBI:29105"/>
        <label>2</label>
    </ligand>
</feature>
<feature type="binding site" evidence="1">
    <location>
        <position position="186"/>
    </location>
    <ligand>
        <name>Zn(2+)</name>
        <dbReference type="ChEBI" id="CHEBI:29105"/>
        <label>2</label>
    </ligand>
</feature>
<feature type="binding site" evidence="1">
    <location>
        <position position="190"/>
    </location>
    <ligand>
        <name>Zn(2+)</name>
        <dbReference type="ChEBI" id="CHEBI:29105"/>
        <label>2</label>
    </ligand>
</feature>
<feature type="modified residue" description="Phosphoserine" evidence="2">
    <location>
        <position position="56"/>
    </location>
</feature>
<feature type="modified residue" description="Phosphothreonine; by KIN10" evidence="9">
    <location>
        <position position="98"/>
    </location>
</feature>
<feature type="modified residue" description="Phosphoserine; by KIN10" evidence="9">
    <location>
        <position position="178"/>
    </location>
</feature>
<feature type="modified residue" description="Phosphoserine; by KIN10" evidence="9">
    <location>
        <position position="182"/>
    </location>
</feature>
<feature type="mutagenesis site" description="Reduction of KIN10-mediated phosphorylation." evidence="9">
    <original>T</original>
    <variation>A</variation>
    <location>
        <position position="98"/>
    </location>
</feature>
<feature type="mutagenesis site" description="Reduction of KIN10-mediated phosphorylation. Constitutive transcription factor activity." evidence="9">
    <original>S</original>
    <variation>A</variation>
    <location>
        <position position="178"/>
    </location>
</feature>
<feature type="mutagenesis site" description="Strong reduction of KIN10-mediated phosphorylation. Constitutive transcription factor activity." evidence="9">
    <original>S</original>
    <variation>A</variation>
    <location>
        <position position="182"/>
    </location>
</feature>
<evidence type="ECO:0000250" key="1">
    <source>
        <dbReference type="UniProtKB" id="Q700D2"/>
    </source>
</evidence>
<evidence type="ECO:0000250" key="2">
    <source>
        <dbReference type="UniProtKB" id="Q8GYC1"/>
    </source>
</evidence>
<evidence type="ECO:0000255" key="3">
    <source>
        <dbReference type="PROSITE-ProRule" id="PRU00042"/>
    </source>
</evidence>
<evidence type="ECO:0000255" key="4">
    <source>
        <dbReference type="PROSITE-ProRule" id="PRU00768"/>
    </source>
</evidence>
<evidence type="ECO:0000256" key="5">
    <source>
        <dbReference type="SAM" id="MobiDB-lite"/>
    </source>
</evidence>
<evidence type="ECO:0000269" key="6">
    <source>
    </source>
</evidence>
<evidence type="ECO:0000269" key="7">
    <source>
    </source>
</evidence>
<evidence type="ECO:0000269" key="8">
    <source>
    </source>
</evidence>
<evidence type="ECO:0000269" key="9">
    <source>
    </source>
</evidence>
<evidence type="ECO:0000303" key="10">
    <source>
    </source>
</evidence>
<evidence type="ECO:0000303" key="11">
    <source>
    </source>
</evidence>
<evidence type="ECO:0000305" key="12"/>
<evidence type="ECO:0000305" key="13">
    <source>
    </source>
</evidence>
<reference key="1">
    <citation type="journal article" date="1997" name="DNA Res.">
        <title>Structural analysis of Arabidopsis thaliana chromosome 5. I. Sequence features of the 1.6 Mb regions covered by twenty physically assigned P1 clones.</title>
        <authorList>
            <person name="Sato S."/>
            <person name="Kotani H."/>
            <person name="Nakamura Y."/>
            <person name="Kaneko T."/>
            <person name="Asamizu E."/>
            <person name="Fukami M."/>
            <person name="Miyajima N."/>
            <person name="Tabata S."/>
        </authorList>
    </citation>
    <scope>NUCLEOTIDE SEQUENCE [LARGE SCALE GENOMIC DNA]</scope>
    <source>
        <strain>cv. Columbia</strain>
    </source>
</reference>
<reference key="2">
    <citation type="journal article" date="2017" name="Plant J.">
        <title>Araport11: a complete reannotation of the Arabidopsis thaliana reference genome.</title>
        <authorList>
            <person name="Cheng C.Y."/>
            <person name="Krishnakumar V."/>
            <person name="Chan A.P."/>
            <person name="Thibaud-Nissen F."/>
            <person name="Schobel S."/>
            <person name="Town C.D."/>
        </authorList>
    </citation>
    <scope>GENOME REANNOTATION</scope>
    <source>
        <strain>cv. Columbia</strain>
    </source>
</reference>
<reference key="3">
    <citation type="journal article" date="2003" name="Science">
        <title>Empirical analysis of transcriptional activity in the Arabidopsis genome.</title>
        <authorList>
            <person name="Yamada K."/>
            <person name="Lim J."/>
            <person name="Dale J.M."/>
            <person name="Chen H."/>
            <person name="Shinn P."/>
            <person name="Palm C.J."/>
            <person name="Southwick A.M."/>
            <person name="Wu H.C."/>
            <person name="Kim C.J."/>
            <person name="Nguyen M."/>
            <person name="Pham P.K."/>
            <person name="Cheuk R.F."/>
            <person name="Karlin-Newmann G."/>
            <person name="Liu S.X."/>
            <person name="Lam B."/>
            <person name="Sakano H."/>
            <person name="Wu T."/>
            <person name="Yu G."/>
            <person name="Miranda M."/>
            <person name="Quach H.L."/>
            <person name="Tripp M."/>
            <person name="Chang C.H."/>
            <person name="Lee J.M."/>
            <person name="Toriumi M.J."/>
            <person name="Chan M.M."/>
            <person name="Tang C.C."/>
            <person name="Onodera C.S."/>
            <person name="Deng J.M."/>
            <person name="Akiyama K."/>
            <person name="Ansari Y."/>
            <person name="Arakawa T."/>
            <person name="Banh J."/>
            <person name="Banno F."/>
            <person name="Bowser L."/>
            <person name="Brooks S.Y."/>
            <person name="Carninci P."/>
            <person name="Chao Q."/>
            <person name="Choy N."/>
            <person name="Enju A."/>
            <person name="Goldsmith A.D."/>
            <person name="Gurjal M."/>
            <person name="Hansen N.F."/>
            <person name="Hayashizaki Y."/>
            <person name="Johnson-Hopson C."/>
            <person name="Hsuan V.W."/>
            <person name="Iida K."/>
            <person name="Karnes M."/>
            <person name="Khan S."/>
            <person name="Koesema E."/>
            <person name="Ishida J."/>
            <person name="Jiang P.X."/>
            <person name="Jones T."/>
            <person name="Kawai J."/>
            <person name="Kamiya A."/>
            <person name="Meyers C."/>
            <person name="Nakajima M."/>
            <person name="Narusaka M."/>
            <person name="Seki M."/>
            <person name="Sakurai T."/>
            <person name="Satou M."/>
            <person name="Tamse R."/>
            <person name="Vaysberg M."/>
            <person name="Wallender E.K."/>
            <person name="Wong C."/>
            <person name="Yamamura Y."/>
            <person name="Yuan S."/>
            <person name="Shinozaki K."/>
            <person name="Davis R.W."/>
            <person name="Theologis A."/>
            <person name="Ecker J.R."/>
        </authorList>
    </citation>
    <scope>NUCLEOTIDE SEQUENCE [LARGE SCALE MRNA]</scope>
    <source>
        <strain>cv. Columbia</strain>
    </source>
</reference>
<reference key="4">
    <citation type="journal article" date="2006" name="BMC Genomics">
        <title>The maize INDETERMINATE1 flowering time regulator defines a highly conserved zinc finger protein family in higher plants.</title>
        <authorList>
            <person name="Colasanti J."/>
            <person name="Tremblay R."/>
            <person name="Wong A.Y."/>
            <person name="Coneva V."/>
            <person name="Kozaki A."/>
            <person name="Mable B.K."/>
        </authorList>
    </citation>
    <scope>GENE FAMILY</scope>
    <scope>NOMENCLATURE</scope>
</reference>
<reference key="5">
    <citation type="journal article" date="2006" name="PLoS Biol.">
        <title>Whole-genome analysis of the SHORT-ROOT developmental pathway in Arabidopsis.</title>
        <authorList>
            <person name="Levesque M.P."/>
            <person name="Vernoux T."/>
            <person name="Busch W."/>
            <person name="Cui H."/>
            <person name="Wang J.Y."/>
            <person name="Blilou I."/>
            <person name="Hassan H."/>
            <person name="Nakajima K."/>
            <person name="Matsumoto N."/>
            <person name="Lohmann J.U."/>
            <person name="Scheres B."/>
            <person name="Benfey P.N."/>
        </authorList>
    </citation>
    <scope>INDUCTION BY SHR</scope>
</reference>
<reference key="6">
    <citation type="journal article" date="2011" name="Plant J.">
        <title>Modulation of sugar metabolism by an INDETERMINATE DOMAIN transcription factor contributes to photoperiodic flowering in Arabidopsis.</title>
        <authorList>
            <person name="Seo P.J."/>
            <person name="Ryu J."/>
            <person name="Kang S.K."/>
            <person name="Park C.M."/>
        </authorList>
    </citation>
    <scope>FUNCTION</scope>
    <scope>DISRUPTION PHENOTYPE</scope>
    <scope>SUBCELLULAR LOCATION</scope>
    <scope>DEVELOPMENTAL STAGE</scope>
    <scope>TISSUE SPECIFICITY</scope>
    <scope>INDUCTION</scope>
</reference>
<reference key="7">
    <citation type="journal article" date="2015" name="BMC Plant Biol.">
        <title>AKIN10 delays flowering by inactivating IDD8 transcription factor through protein phosphorylation in Arabidopsis.</title>
        <authorList>
            <person name="Jeong E.-Y."/>
            <person name="Seo P.J."/>
            <person name="Woo J.C."/>
            <person name="Park C.-M."/>
        </authorList>
    </citation>
    <scope>FUNCTION</scope>
    <scope>DISRUPTION PHENOTYPE</scope>
    <scope>PHOSPHORYLATION AT THR-98; SER-178 AND SER-182</scope>
    <scope>INTERACTION WITH KIN10</scope>
    <scope>SUBCELLULAR LOCATION</scope>
    <scope>MUTAGENESIS OF THR-98; SER-178 AND SER-182</scope>
    <source>
        <strain>cv. Columbia</strain>
    </source>
</reference>
<reference key="8">
    <citation type="journal article" date="2015" name="Plant Cell">
        <title>Arabidopsis BIRD zinc finger proteins jointly stabilize tissue boundaries by confining the cell fate regulator SHORT-ROOT and contributing to fate specification.</title>
        <authorList>
            <person name="Long Y."/>
            <person name="Smet W."/>
            <person name="Cruz-Ramirez A."/>
            <person name="Castelijns B."/>
            <person name="de Jonge W."/>
            <person name="Maehoenen A.P."/>
            <person name="Bouchet B.P."/>
            <person name="Perez G.S."/>
            <person name="Akhmanova A."/>
            <person name="Scheres B."/>
            <person name="Blilou I."/>
        </authorList>
    </citation>
    <scope>FUNCTION</scope>
    <scope>DISRUPTION PHENOTYPE</scope>
    <scope>TISSUE SPECIFICITY</scope>
    <source>
        <strain>cv. Columbia</strain>
    </source>
</reference>